<organism>
    <name type="scientific">Coxiella burnetii (strain RSA 493 / Nine Mile phase I)</name>
    <dbReference type="NCBI Taxonomy" id="227377"/>
    <lineage>
        <taxon>Bacteria</taxon>
        <taxon>Pseudomonadati</taxon>
        <taxon>Pseudomonadota</taxon>
        <taxon>Gammaproteobacteria</taxon>
        <taxon>Legionellales</taxon>
        <taxon>Coxiellaceae</taxon>
        <taxon>Coxiella</taxon>
    </lineage>
</organism>
<dbReference type="EMBL" id="AE016828">
    <property type="protein sequence ID" value="AAO89786.1"/>
    <property type="molecule type" value="Genomic_DNA"/>
</dbReference>
<dbReference type="RefSeq" id="NP_819272.1">
    <property type="nucleotide sequence ID" value="NC_002971.4"/>
</dbReference>
<dbReference type="RefSeq" id="WP_005771616.1">
    <property type="nucleotide sequence ID" value="NZ_CCYB01000061.1"/>
</dbReference>
<dbReference type="SMR" id="Q83ET2"/>
<dbReference type="STRING" id="227377.CBU_0228"/>
<dbReference type="DNASU" id="1208109"/>
<dbReference type="EnsemblBacteria" id="AAO89786">
    <property type="protein sequence ID" value="AAO89786"/>
    <property type="gene ID" value="CBU_0228"/>
</dbReference>
<dbReference type="GeneID" id="1208109"/>
<dbReference type="KEGG" id="cbu:CBU_0228"/>
<dbReference type="PATRIC" id="fig|227377.7.peg.222"/>
<dbReference type="eggNOG" id="COG0244">
    <property type="taxonomic scope" value="Bacteria"/>
</dbReference>
<dbReference type="HOGENOM" id="CLU_092227_0_1_6"/>
<dbReference type="OrthoDB" id="9808307at2"/>
<dbReference type="Proteomes" id="UP000002671">
    <property type="component" value="Chromosome"/>
</dbReference>
<dbReference type="GO" id="GO:0022625">
    <property type="term" value="C:cytosolic large ribosomal subunit"/>
    <property type="evidence" value="ECO:0000318"/>
    <property type="project" value="GO_Central"/>
</dbReference>
<dbReference type="GO" id="GO:0070180">
    <property type="term" value="F:large ribosomal subunit rRNA binding"/>
    <property type="evidence" value="ECO:0007669"/>
    <property type="project" value="UniProtKB-UniRule"/>
</dbReference>
<dbReference type="GO" id="GO:0003735">
    <property type="term" value="F:structural constituent of ribosome"/>
    <property type="evidence" value="ECO:0000318"/>
    <property type="project" value="GO_Central"/>
</dbReference>
<dbReference type="GO" id="GO:0006412">
    <property type="term" value="P:translation"/>
    <property type="evidence" value="ECO:0000318"/>
    <property type="project" value="GO_Central"/>
</dbReference>
<dbReference type="CDD" id="cd05797">
    <property type="entry name" value="Ribosomal_L10"/>
    <property type="match status" value="1"/>
</dbReference>
<dbReference type="Gene3D" id="3.30.70.1730">
    <property type="match status" value="1"/>
</dbReference>
<dbReference type="Gene3D" id="6.10.250.290">
    <property type="match status" value="1"/>
</dbReference>
<dbReference type="HAMAP" id="MF_00362">
    <property type="entry name" value="Ribosomal_uL10"/>
    <property type="match status" value="1"/>
</dbReference>
<dbReference type="InterPro" id="IPR001790">
    <property type="entry name" value="Ribosomal_uL10"/>
</dbReference>
<dbReference type="InterPro" id="IPR043141">
    <property type="entry name" value="Ribosomal_uL10-like_sf"/>
</dbReference>
<dbReference type="InterPro" id="IPR022973">
    <property type="entry name" value="Ribosomal_uL10_bac"/>
</dbReference>
<dbReference type="InterPro" id="IPR047865">
    <property type="entry name" value="Ribosomal_uL10_bac_type"/>
</dbReference>
<dbReference type="InterPro" id="IPR002363">
    <property type="entry name" value="Ribosomal_uL10_CS_bac"/>
</dbReference>
<dbReference type="NCBIfam" id="NF000955">
    <property type="entry name" value="PRK00099.1-1"/>
    <property type="match status" value="1"/>
</dbReference>
<dbReference type="PANTHER" id="PTHR11560">
    <property type="entry name" value="39S RIBOSOMAL PROTEIN L10, MITOCHONDRIAL"/>
    <property type="match status" value="1"/>
</dbReference>
<dbReference type="Pfam" id="PF00466">
    <property type="entry name" value="Ribosomal_L10"/>
    <property type="match status" value="1"/>
</dbReference>
<dbReference type="SUPFAM" id="SSF160369">
    <property type="entry name" value="Ribosomal protein L10-like"/>
    <property type="match status" value="1"/>
</dbReference>
<dbReference type="PROSITE" id="PS01109">
    <property type="entry name" value="RIBOSOMAL_L10"/>
    <property type="match status" value="1"/>
</dbReference>
<accession>Q83ET2</accession>
<reference key="1">
    <citation type="journal article" date="2003" name="Proc. Natl. Acad. Sci. U.S.A.">
        <title>Complete genome sequence of the Q-fever pathogen, Coxiella burnetii.</title>
        <authorList>
            <person name="Seshadri R."/>
            <person name="Paulsen I.T."/>
            <person name="Eisen J.A."/>
            <person name="Read T.D."/>
            <person name="Nelson K.E."/>
            <person name="Nelson W.C."/>
            <person name="Ward N.L."/>
            <person name="Tettelin H."/>
            <person name="Davidsen T.M."/>
            <person name="Beanan M.J."/>
            <person name="DeBoy R.T."/>
            <person name="Daugherty S.C."/>
            <person name="Brinkac L.M."/>
            <person name="Madupu R."/>
            <person name="Dodson R.J."/>
            <person name="Khouri H.M."/>
            <person name="Lee K.H."/>
            <person name="Carty H.A."/>
            <person name="Scanlan D."/>
            <person name="Heinzen R.A."/>
            <person name="Thompson H.A."/>
            <person name="Samuel J.E."/>
            <person name="Fraser C.M."/>
            <person name="Heidelberg J.F."/>
        </authorList>
    </citation>
    <scope>NUCLEOTIDE SEQUENCE [LARGE SCALE GENOMIC DNA]</scope>
    <source>
        <strain>RSA 493 / Nine Mile phase I</strain>
    </source>
</reference>
<evidence type="ECO:0000255" key="1">
    <source>
        <dbReference type="HAMAP-Rule" id="MF_00362"/>
    </source>
</evidence>
<evidence type="ECO:0000305" key="2"/>
<protein>
    <recommendedName>
        <fullName evidence="1">Large ribosomal subunit protein uL10</fullName>
    </recommendedName>
    <alternativeName>
        <fullName evidence="2">50S ribosomal protein L10</fullName>
    </alternativeName>
</protein>
<feature type="chain" id="PRO_0000154623" description="Large ribosomal subunit protein uL10">
    <location>
        <begin position="1"/>
        <end position="174"/>
    </location>
</feature>
<gene>
    <name evidence="1" type="primary">rplJ</name>
    <name type="ordered locus">CBU_0228</name>
</gene>
<keyword id="KW-1185">Reference proteome</keyword>
<keyword id="KW-0687">Ribonucleoprotein</keyword>
<keyword id="KW-0689">Ribosomal protein</keyword>
<keyword id="KW-0694">RNA-binding</keyword>
<keyword id="KW-0699">rRNA-binding</keyword>
<proteinExistence type="inferred from homology"/>
<name>RL10_COXBU</name>
<sequence length="174" mass="19122">MALNLEQKKAMVAEITDIANQAVSAVAADYRGLTVSEMSDLRKSAREARVHMRVYRNTLARRAFKETTYACLEEVLTGPIVLFFSQEEPGAAARLIEKFIKEHERLEVKGLALGGELLPAEKLKAVARLPSREEALSQLAAVLLAPVTKLVRTLNEPIAQVARVMAAVRDQKAA</sequence>
<comment type="function">
    <text evidence="1">Forms part of the ribosomal stalk, playing a central role in the interaction of the ribosome with GTP-bound translation factors.</text>
</comment>
<comment type="subunit">
    <text evidence="1">Part of the ribosomal stalk of the 50S ribosomal subunit. The N-terminus interacts with L11 and the large rRNA to form the base of the stalk. The C-terminus forms an elongated spine to which L12 dimers bind in a sequential fashion forming a multimeric L10(L12)X complex.</text>
</comment>
<comment type="similarity">
    <text evidence="1">Belongs to the universal ribosomal protein uL10 family.</text>
</comment>